<proteinExistence type="inferred from homology"/>
<feature type="chain" id="PRO_0000140108" description="GMP synthase [glutamine-hydrolyzing]">
    <location>
        <begin position="1"/>
        <end position="512"/>
    </location>
</feature>
<feature type="domain" description="Glutamine amidotransferase type-1" evidence="1">
    <location>
        <begin position="3"/>
        <end position="196"/>
    </location>
</feature>
<feature type="domain" description="GMPS ATP-PPase" evidence="1">
    <location>
        <begin position="197"/>
        <end position="387"/>
    </location>
</feature>
<feature type="active site" description="Nucleophile" evidence="1">
    <location>
        <position position="80"/>
    </location>
</feature>
<feature type="active site" evidence="1">
    <location>
        <position position="169"/>
    </location>
</feature>
<feature type="active site" evidence="1">
    <location>
        <position position="171"/>
    </location>
</feature>
<feature type="binding site" evidence="1">
    <location>
        <begin position="225"/>
        <end position="231"/>
    </location>
    <ligand>
        <name>ATP</name>
        <dbReference type="ChEBI" id="CHEBI:30616"/>
    </ligand>
</feature>
<gene>
    <name evidence="1" type="primary">guaA</name>
    <name type="ordered locus">CCA_00573</name>
</gene>
<comment type="function">
    <text evidence="1">Catalyzes the synthesis of GMP from XMP.</text>
</comment>
<comment type="catalytic activity">
    <reaction evidence="1">
        <text>XMP + L-glutamine + ATP + H2O = GMP + L-glutamate + AMP + diphosphate + 2 H(+)</text>
        <dbReference type="Rhea" id="RHEA:11680"/>
        <dbReference type="ChEBI" id="CHEBI:15377"/>
        <dbReference type="ChEBI" id="CHEBI:15378"/>
        <dbReference type="ChEBI" id="CHEBI:29985"/>
        <dbReference type="ChEBI" id="CHEBI:30616"/>
        <dbReference type="ChEBI" id="CHEBI:33019"/>
        <dbReference type="ChEBI" id="CHEBI:57464"/>
        <dbReference type="ChEBI" id="CHEBI:58115"/>
        <dbReference type="ChEBI" id="CHEBI:58359"/>
        <dbReference type="ChEBI" id="CHEBI:456215"/>
        <dbReference type="EC" id="6.3.5.2"/>
    </reaction>
</comment>
<comment type="pathway">
    <text evidence="1">Purine metabolism; GMP biosynthesis; GMP from XMP (L-Gln route): step 1/1.</text>
</comment>
<comment type="subunit">
    <text evidence="1">Homodimer.</text>
</comment>
<dbReference type="EC" id="6.3.5.2" evidence="1"/>
<dbReference type="EMBL" id="AE015925">
    <property type="protein sequence ID" value="AAP05315.1"/>
    <property type="molecule type" value="Genomic_DNA"/>
</dbReference>
<dbReference type="RefSeq" id="WP_011006530.1">
    <property type="nucleotide sequence ID" value="NC_003361.3"/>
</dbReference>
<dbReference type="SMR" id="Q822V6"/>
<dbReference type="STRING" id="227941.CCA_00573"/>
<dbReference type="KEGG" id="cca:CCA_00573"/>
<dbReference type="eggNOG" id="COG0519">
    <property type="taxonomic scope" value="Bacteria"/>
</dbReference>
<dbReference type="HOGENOM" id="CLU_014340_0_5_0"/>
<dbReference type="OrthoDB" id="9802219at2"/>
<dbReference type="UniPathway" id="UPA00189">
    <property type="reaction ID" value="UER00296"/>
</dbReference>
<dbReference type="Proteomes" id="UP000002193">
    <property type="component" value="Chromosome"/>
</dbReference>
<dbReference type="GO" id="GO:0005829">
    <property type="term" value="C:cytosol"/>
    <property type="evidence" value="ECO:0007669"/>
    <property type="project" value="TreeGrafter"/>
</dbReference>
<dbReference type="GO" id="GO:0005524">
    <property type="term" value="F:ATP binding"/>
    <property type="evidence" value="ECO:0007669"/>
    <property type="project" value="UniProtKB-UniRule"/>
</dbReference>
<dbReference type="GO" id="GO:0003921">
    <property type="term" value="F:GMP synthase activity"/>
    <property type="evidence" value="ECO:0007669"/>
    <property type="project" value="InterPro"/>
</dbReference>
<dbReference type="CDD" id="cd01742">
    <property type="entry name" value="GATase1_GMP_Synthase"/>
    <property type="match status" value="1"/>
</dbReference>
<dbReference type="CDD" id="cd01997">
    <property type="entry name" value="GMP_synthase_C"/>
    <property type="match status" value="1"/>
</dbReference>
<dbReference type="FunFam" id="3.30.300.10:FF:000002">
    <property type="entry name" value="GMP synthase [glutamine-hydrolyzing]"/>
    <property type="match status" value="1"/>
</dbReference>
<dbReference type="FunFam" id="3.40.50.620:FF:000001">
    <property type="entry name" value="GMP synthase [glutamine-hydrolyzing]"/>
    <property type="match status" value="1"/>
</dbReference>
<dbReference type="Gene3D" id="3.30.300.10">
    <property type="match status" value="1"/>
</dbReference>
<dbReference type="Gene3D" id="3.40.50.880">
    <property type="match status" value="1"/>
</dbReference>
<dbReference type="Gene3D" id="3.40.50.620">
    <property type="entry name" value="HUPs"/>
    <property type="match status" value="1"/>
</dbReference>
<dbReference type="HAMAP" id="MF_00344">
    <property type="entry name" value="GMP_synthase"/>
    <property type="match status" value="1"/>
</dbReference>
<dbReference type="InterPro" id="IPR029062">
    <property type="entry name" value="Class_I_gatase-like"/>
</dbReference>
<dbReference type="InterPro" id="IPR017926">
    <property type="entry name" value="GATASE"/>
</dbReference>
<dbReference type="InterPro" id="IPR001674">
    <property type="entry name" value="GMP_synth_C"/>
</dbReference>
<dbReference type="InterPro" id="IPR004739">
    <property type="entry name" value="GMP_synth_GATase"/>
</dbReference>
<dbReference type="InterPro" id="IPR022955">
    <property type="entry name" value="GMP_synthase"/>
</dbReference>
<dbReference type="InterPro" id="IPR025777">
    <property type="entry name" value="GMPS_ATP_PPase_dom"/>
</dbReference>
<dbReference type="InterPro" id="IPR022310">
    <property type="entry name" value="NAD/GMP_synthase"/>
</dbReference>
<dbReference type="InterPro" id="IPR014729">
    <property type="entry name" value="Rossmann-like_a/b/a_fold"/>
</dbReference>
<dbReference type="NCBIfam" id="TIGR00884">
    <property type="entry name" value="guaA_Cterm"/>
    <property type="match status" value="1"/>
</dbReference>
<dbReference type="NCBIfam" id="TIGR00888">
    <property type="entry name" value="guaA_Nterm"/>
    <property type="match status" value="1"/>
</dbReference>
<dbReference type="NCBIfam" id="NF000848">
    <property type="entry name" value="PRK00074.1"/>
    <property type="match status" value="1"/>
</dbReference>
<dbReference type="PANTHER" id="PTHR11922:SF2">
    <property type="entry name" value="GMP SYNTHASE [GLUTAMINE-HYDROLYZING]"/>
    <property type="match status" value="1"/>
</dbReference>
<dbReference type="PANTHER" id="PTHR11922">
    <property type="entry name" value="GMP SYNTHASE-RELATED"/>
    <property type="match status" value="1"/>
</dbReference>
<dbReference type="Pfam" id="PF00117">
    <property type="entry name" value="GATase"/>
    <property type="match status" value="1"/>
</dbReference>
<dbReference type="Pfam" id="PF00958">
    <property type="entry name" value="GMP_synt_C"/>
    <property type="match status" value="1"/>
</dbReference>
<dbReference type="Pfam" id="PF02540">
    <property type="entry name" value="NAD_synthase"/>
    <property type="match status" value="1"/>
</dbReference>
<dbReference type="PRINTS" id="PR00096">
    <property type="entry name" value="GATASE"/>
</dbReference>
<dbReference type="SUPFAM" id="SSF52402">
    <property type="entry name" value="Adenine nucleotide alpha hydrolases-like"/>
    <property type="match status" value="1"/>
</dbReference>
<dbReference type="SUPFAM" id="SSF52317">
    <property type="entry name" value="Class I glutamine amidotransferase-like"/>
    <property type="match status" value="1"/>
</dbReference>
<dbReference type="SUPFAM" id="SSF54810">
    <property type="entry name" value="GMP synthetase C-terminal dimerisation domain"/>
    <property type="match status" value="1"/>
</dbReference>
<dbReference type="PROSITE" id="PS51273">
    <property type="entry name" value="GATASE_TYPE_1"/>
    <property type="match status" value="1"/>
</dbReference>
<dbReference type="PROSITE" id="PS51553">
    <property type="entry name" value="GMPS_ATP_PPASE"/>
    <property type="match status" value="1"/>
</dbReference>
<keyword id="KW-0067">ATP-binding</keyword>
<keyword id="KW-0315">Glutamine amidotransferase</keyword>
<keyword id="KW-0332">GMP biosynthesis</keyword>
<keyword id="KW-0436">Ligase</keyword>
<keyword id="KW-0547">Nucleotide-binding</keyword>
<keyword id="KW-0658">Purine biosynthesis</keyword>
<organism>
    <name type="scientific">Chlamydia caviae (strain ATCC VR-813 / DSM 19441 / 03DC25 / GPIC)</name>
    <name type="common">Chlamydophila caviae</name>
    <dbReference type="NCBI Taxonomy" id="227941"/>
    <lineage>
        <taxon>Bacteria</taxon>
        <taxon>Pseudomonadati</taxon>
        <taxon>Chlamydiota</taxon>
        <taxon>Chlamydiia</taxon>
        <taxon>Chlamydiales</taxon>
        <taxon>Chlamydiaceae</taxon>
        <taxon>Chlamydia/Chlamydophila group</taxon>
        <taxon>Chlamydia</taxon>
    </lineage>
</organism>
<evidence type="ECO:0000255" key="1">
    <source>
        <dbReference type="HAMAP-Rule" id="MF_00344"/>
    </source>
</evidence>
<sequence length="512" mass="57136">MSNILILDFGSQYTNVLAKKIRLLSVFCEVLTWNTPLEKILQISPSGLIFSGGPHSVYQENSPKVDKEIYNSNIPILGVCYGMQLIARDFGSEVQGGKSEFGYTPIVFYPSELFKGLVDQDAFHTEIRMSHCDSVVIPPKDFFVIASSQHCPIAAIECPEKKLFGLQFHPEVSDSQAVGDKILSNFVKHICQASETWKIETIEKQLIQSIKEKVGETERVLLGLSGGVDSSVLAVLLHNALGDRLSCVFVDTGLLRKNEVEEVKQQFSSLGLEILVVDASEKFFHDLSGIEDPEQKRKVIGAAFIEVFDEVSRNLDVQWLAQGTIYSDVIESAKSCDATQVIKSHHNVGGLPEKLNLKLLEPLRFLFKDEVRALGKVLGLPDVLISRHPFPGPGLGVRVLGEVRREYVEIVKNADSIFIEELKKANLYHKVSQAFAVFLPCKSVAVKGDCRHYGYTIALRAIESTDFMTACWPSLSREFLNRCSSRIINEIPEVCRVVYDISDKPPATIEWE</sequence>
<protein>
    <recommendedName>
        <fullName evidence="1">GMP synthase [glutamine-hydrolyzing]</fullName>
        <ecNumber evidence="1">6.3.5.2</ecNumber>
    </recommendedName>
    <alternativeName>
        <fullName evidence="1">GMP synthetase</fullName>
    </alternativeName>
    <alternativeName>
        <fullName evidence="1">Glutamine amidotransferase</fullName>
    </alternativeName>
</protein>
<reference key="1">
    <citation type="journal article" date="2003" name="Nucleic Acids Res.">
        <title>Genome sequence of Chlamydophila caviae (Chlamydia psittaci GPIC): examining the role of niche-specific genes in the evolution of the Chlamydiaceae.</title>
        <authorList>
            <person name="Read T.D."/>
            <person name="Myers G.S.A."/>
            <person name="Brunham R.C."/>
            <person name="Nelson W.C."/>
            <person name="Paulsen I.T."/>
            <person name="Heidelberg J.F."/>
            <person name="Holtzapple E.K."/>
            <person name="Khouri H.M."/>
            <person name="Federova N.B."/>
            <person name="Carty H.A."/>
            <person name="Umayam L.A."/>
            <person name="Haft D.H."/>
            <person name="Peterson J.D."/>
            <person name="Beanan M.J."/>
            <person name="White O."/>
            <person name="Salzberg S.L."/>
            <person name="Hsia R.-C."/>
            <person name="McClarty G."/>
            <person name="Rank R.G."/>
            <person name="Bavoil P.M."/>
            <person name="Fraser C.M."/>
        </authorList>
    </citation>
    <scope>NUCLEOTIDE SEQUENCE [LARGE SCALE GENOMIC DNA]</scope>
    <source>
        <strain>ATCC VR-813 / DSM 19441 / 03DC25 / GPIC</strain>
    </source>
</reference>
<accession>Q822V6</accession>
<name>GUAA_CHLCV</name>